<feature type="chain" id="PRO_1000038817" description="Lipoprotein signal peptidase">
    <location>
        <begin position="1"/>
        <end position="176"/>
    </location>
</feature>
<feature type="transmembrane region" description="Helical" evidence="1">
    <location>
        <begin position="26"/>
        <end position="46"/>
    </location>
</feature>
<feature type="transmembrane region" description="Helical" evidence="1">
    <location>
        <begin position="60"/>
        <end position="80"/>
    </location>
</feature>
<feature type="transmembrane region" description="Helical" evidence="1">
    <location>
        <begin position="82"/>
        <end position="102"/>
    </location>
</feature>
<feature type="transmembrane region" description="Helical" evidence="1">
    <location>
        <begin position="107"/>
        <end position="127"/>
    </location>
</feature>
<feature type="transmembrane region" description="Helical" evidence="1">
    <location>
        <begin position="147"/>
        <end position="167"/>
    </location>
</feature>
<feature type="active site" evidence="1">
    <location>
        <position position="137"/>
    </location>
</feature>
<feature type="active site" evidence="1">
    <location>
        <position position="155"/>
    </location>
</feature>
<organism>
    <name type="scientific">Cupriavidus pinatubonensis (strain JMP 134 / LMG 1197)</name>
    <name type="common">Cupriavidus necator (strain JMP 134)</name>
    <dbReference type="NCBI Taxonomy" id="264198"/>
    <lineage>
        <taxon>Bacteria</taxon>
        <taxon>Pseudomonadati</taxon>
        <taxon>Pseudomonadota</taxon>
        <taxon>Betaproteobacteria</taxon>
        <taxon>Burkholderiales</taxon>
        <taxon>Burkholderiaceae</taxon>
        <taxon>Cupriavidus</taxon>
    </lineage>
</organism>
<proteinExistence type="inferred from homology"/>
<name>LSPA_CUPPJ</name>
<reference key="1">
    <citation type="journal article" date="2010" name="PLoS ONE">
        <title>The complete multipartite genome sequence of Cupriavidus necator JMP134, a versatile pollutant degrader.</title>
        <authorList>
            <person name="Lykidis A."/>
            <person name="Perez-Pantoja D."/>
            <person name="Ledger T."/>
            <person name="Mavromatis K."/>
            <person name="Anderson I.J."/>
            <person name="Ivanova N.N."/>
            <person name="Hooper S.D."/>
            <person name="Lapidus A."/>
            <person name="Lucas S."/>
            <person name="Gonzalez B."/>
            <person name="Kyrpides N.C."/>
        </authorList>
    </citation>
    <scope>NUCLEOTIDE SEQUENCE [LARGE SCALE GENOMIC DNA]</scope>
    <source>
        <strain>JMP134 / LMG 1197</strain>
    </source>
</reference>
<evidence type="ECO:0000255" key="1">
    <source>
        <dbReference type="HAMAP-Rule" id="MF_00161"/>
    </source>
</evidence>
<accession>Q46XM6</accession>
<gene>
    <name evidence="1" type="primary">lspA</name>
    <name type="ordered locus">Reut_A2746</name>
</gene>
<keyword id="KW-0064">Aspartyl protease</keyword>
<keyword id="KW-0997">Cell inner membrane</keyword>
<keyword id="KW-1003">Cell membrane</keyword>
<keyword id="KW-0378">Hydrolase</keyword>
<keyword id="KW-0472">Membrane</keyword>
<keyword id="KW-0645">Protease</keyword>
<keyword id="KW-0812">Transmembrane</keyword>
<keyword id="KW-1133">Transmembrane helix</keyword>
<protein>
    <recommendedName>
        <fullName evidence="1">Lipoprotein signal peptidase</fullName>
        <ecNumber evidence="1">3.4.23.36</ecNumber>
    </recommendedName>
    <alternativeName>
        <fullName evidence="1">Prolipoprotein signal peptidase</fullName>
    </alternativeName>
    <alternativeName>
        <fullName evidence="1">Signal peptidase II</fullName>
        <shortName evidence="1">SPase II</shortName>
    </alternativeName>
</protein>
<sequence length="176" mass="19826">MASTTSRSARPARRNNKASGNTTPLLWMAFALLVVVLDQFFKIVIVRTFTYGESRPVTRFFNLVLVYNKGAAFSFLADAGGWQRWFFTGLGLVVGAFIVWLLYRHTGQKLFCFAVSLILGGAVGNVVDRVVYGHVIDFLDFYVRNYHWPAFNVADCAITVGAVLLIVDELRRVRKH</sequence>
<comment type="function">
    <text evidence="1">This protein specifically catalyzes the removal of signal peptides from prolipoproteins.</text>
</comment>
<comment type="catalytic activity">
    <reaction evidence="1">
        <text>Release of signal peptides from bacterial membrane prolipoproteins. Hydrolyzes -Xaa-Yaa-Zaa-|-(S,diacylglyceryl)Cys-, in which Xaa is hydrophobic (preferably Leu), and Yaa (Ala or Ser) and Zaa (Gly or Ala) have small, neutral side chains.</text>
        <dbReference type="EC" id="3.4.23.36"/>
    </reaction>
</comment>
<comment type="pathway">
    <text evidence="1">Protein modification; lipoprotein biosynthesis (signal peptide cleavage).</text>
</comment>
<comment type="subcellular location">
    <subcellularLocation>
        <location evidence="1">Cell inner membrane</location>
        <topology evidence="1">Multi-pass membrane protein</topology>
    </subcellularLocation>
</comment>
<comment type="similarity">
    <text evidence="1">Belongs to the peptidase A8 family.</text>
</comment>
<dbReference type="EC" id="3.4.23.36" evidence="1"/>
<dbReference type="EMBL" id="CP000090">
    <property type="protein sequence ID" value="AAZ62107.1"/>
    <property type="molecule type" value="Genomic_DNA"/>
</dbReference>
<dbReference type="SMR" id="Q46XM6"/>
<dbReference type="STRING" id="264198.Reut_A2746"/>
<dbReference type="KEGG" id="reu:Reut_A2746"/>
<dbReference type="eggNOG" id="COG0597">
    <property type="taxonomic scope" value="Bacteria"/>
</dbReference>
<dbReference type="HOGENOM" id="CLU_083252_4_0_4"/>
<dbReference type="OrthoDB" id="9810259at2"/>
<dbReference type="UniPathway" id="UPA00665"/>
<dbReference type="GO" id="GO:0005886">
    <property type="term" value="C:plasma membrane"/>
    <property type="evidence" value="ECO:0007669"/>
    <property type="project" value="UniProtKB-SubCell"/>
</dbReference>
<dbReference type="GO" id="GO:0004190">
    <property type="term" value="F:aspartic-type endopeptidase activity"/>
    <property type="evidence" value="ECO:0007669"/>
    <property type="project" value="UniProtKB-UniRule"/>
</dbReference>
<dbReference type="GO" id="GO:0006508">
    <property type="term" value="P:proteolysis"/>
    <property type="evidence" value="ECO:0007669"/>
    <property type="project" value="UniProtKB-KW"/>
</dbReference>
<dbReference type="HAMAP" id="MF_00161">
    <property type="entry name" value="LspA"/>
    <property type="match status" value="1"/>
</dbReference>
<dbReference type="InterPro" id="IPR001872">
    <property type="entry name" value="Peptidase_A8"/>
</dbReference>
<dbReference type="NCBIfam" id="TIGR00077">
    <property type="entry name" value="lspA"/>
    <property type="match status" value="1"/>
</dbReference>
<dbReference type="PANTHER" id="PTHR33695">
    <property type="entry name" value="LIPOPROTEIN SIGNAL PEPTIDASE"/>
    <property type="match status" value="1"/>
</dbReference>
<dbReference type="PANTHER" id="PTHR33695:SF1">
    <property type="entry name" value="LIPOPROTEIN SIGNAL PEPTIDASE"/>
    <property type="match status" value="1"/>
</dbReference>
<dbReference type="Pfam" id="PF01252">
    <property type="entry name" value="Peptidase_A8"/>
    <property type="match status" value="1"/>
</dbReference>
<dbReference type="PRINTS" id="PR00781">
    <property type="entry name" value="LIPOSIGPTASE"/>
</dbReference>
<dbReference type="PROSITE" id="PS00855">
    <property type="entry name" value="SPASE_II"/>
    <property type="match status" value="1"/>
</dbReference>